<reference key="1">
    <citation type="journal article" date="1993" name="Development">
        <title>Expanded: a gene involved in the control of cell proliferation in imaginal discs.</title>
        <authorList>
            <person name="Boedigheimer M."/>
            <person name="Laughon A."/>
        </authorList>
    </citation>
    <scope>NUCLEOTIDE SEQUENCE [MRNA]</scope>
    <scope>DISRUPTION PHENOTYPE</scope>
    <source>
        <tissue>Imaginal disk</tissue>
    </source>
</reference>
<reference key="2">
    <citation type="submission" date="1996-12" db="EMBL/GenBank/DDBJ databases">
        <authorList>
            <person name="Boedigheimer M."/>
        </authorList>
    </citation>
    <scope>SEQUENCE REVISION</scope>
</reference>
<reference key="3">
    <citation type="journal article" date="2000" name="Science">
        <title>The genome sequence of Drosophila melanogaster.</title>
        <authorList>
            <person name="Adams M.D."/>
            <person name="Celniker S.E."/>
            <person name="Holt R.A."/>
            <person name="Evans C.A."/>
            <person name="Gocayne J.D."/>
            <person name="Amanatides P.G."/>
            <person name="Scherer S.E."/>
            <person name="Li P.W."/>
            <person name="Hoskins R.A."/>
            <person name="Galle R.F."/>
            <person name="George R.A."/>
            <person name="Lewis S.E."/>
            <person name="Richards S."/>
            <person name="Ashburner M."/>
            <person name="Henderson S.N."/>
            <person name="Sutton G.G."/>
            <person name="Wortman J.R."/>
            <person name="Yandell M.D."/>
            <person name="Zhang Q."/>
            <person name="Chen L.X."/>
            <person name="Brandon R.C."/>
            <person name="Rogers Y.-H.C."/>
            <person name="Blazej R.G."/>
            <person name="Champe M."/>
            <person name="Pfeiffer B.D."/>
            <person name="Wan K.H."/>
            <person name="Doyle C."/>
            <person name="Baxter E.G."/>
            <person name="Helt G."/>
            <person name="Nelson C.R."/>
            <person name="Miklos G.L.G."/>
            <person name="Abril J.F."/>
            <person name="Agbayani A."/>
            <person name="An H.-J."/>
            <person name="Andrews-Pfannkoch C."/>
            <person name="Baldwin D."/>
            <person name="Ballew R.M."/>
            <person name="Basu A."/>
            <person name="Baxendale J."/>
            <person name="Bayraktaroglu L."/>
            <person name="Beasley E.M."/>
            <person name="Beeson K.Y."/>
            <person name="Benos P.V."/>
            <person name="Berman B.P."/>
            <person name="Bhandari D."/>
            <person name="Bolshakov S."/>
            <person name="Borkova D."/>
            <person name="Botchan M.R."/>
            <person name="Bouck J."/>
            <person name="Brokstein P."/>
            <person name="Brottier P."/>
            <person name="Burtis K.C."/>
            <person name="Busam D.A."/>
            <person name="Butler H."/>
            <person name="Cadieu E."/>
            <person name="Center A."/>
            <person name="Chandra I."/>
            <person name="Cherry J.M."/>
            <person name="Cawley S."/>
            <person name="Dahlke C."/>
            <person name="Davenport L.B."/>
            <person name="Davies P."/>
            <person name="de Pablos B."/>
            <person name="Delcher A."/>
            <person name="Deng Z."/>
            <person name="Mays A.D."/>
            <person name="Dew I."/>
            <person name="Dietz S.M."/>
            <person name="Dodson K."/>
            <person name="Doup L.E."/>
            <person name="Downes M."/>
            <person name="Dugan-Rocha S."/>
            <person name="Dunkov B.C."/>
            <person name="Dunn P."/>
            <person name="Durbin K.J."/>
            <person name="Evangelista C.C."/>
            <person name="Ferraz C."/>
            <person name="Ferriera S."/>
            <person name="Fleischmann W."/>
            <person name="Fosler C."/>
            <person name="Gabrielian A.E."/>
            <person name="Garg N.S."/>
            <person name="Gelbart W.M."/>
            <person name="Glasser K."/>
            <person name="Glodek A."/>
            <person name="Gong F."/>
            <person name="Gorrell J.H."/>
            <person name="Gu Z."/>
            <person name="Guan P."/>
            <person name="Harris M."/>
            <person name="Harris N.L."/>
            <person name="Harvey D.A."/>
            <person name="Heiman T.J."/>
            <person name="Hernandez J.R."/>
            <person name="Houck J."/>
            <person name="Hostin D."/>
            <person name="Houston K.A."/>
            <person name="Howland T.J."/>
            <person name="Wei M.-H."/>
            <person name="Ibegwam C."/>
            <person name="Jalali M."/>
            <person name="Kalush F."/>
            <person name="Karpen G.H."/>
            <person name="Ke Z."/>
            <person name="Kennison J.A."/>
            <person name="Ketchum K.A."/>
            <person name="Kimmel B.E."/>
            <person name="Kodira C.D."/>
            <person name="Kraft C.L."/>
            <person name="Kravitz S."/>
            <person name="Kulp D."/>
            <person name="Lai Z."/>
            <person name="Lasko P."/>
            <person name="Lei Y."/>
            <person name="Levitsky A.A."/>
            <person name="Li J.H."/>
            <person name="Li Z."/>
            <person name="Liang Y."/>
            <person name="Lin X."/>
            <person name="Liu X."/>
            <person name="Mattei B."/>
            <person name="McIntosh T.C."/>
            <person name="McLeod M.P."/>
            <person name="McPherson D."/>
            <person name="Merkulov G."/>
            <person name="Milshina N.V."/>
            <person name="Mobarry C."/>
            <person name="Morris J."/>
            <person name="Moshrefi A."/>
            <person name="Mount S.M."/>
            <person name="Moy M."/>
            <person name="Murphy B."/>
            <person name="Murphy L."/>
            <person name="Muzny D.M."/>
            <person name="Nelson D.L."/>
            <person name="Nelson D.R."/>
            <person name="Nelson K.A."/>
            <person name="Nixon K."/>
            <person name="Nusskern D.R."/>
            <person name="Pacleb J.M."/>
            <person name="Palazzolo M."/>
            <person name="Pittman G.S."/>
            <person name="Pan S."/>
            <person name="Pollard J."/>
            <person name="Puri V."/>
            <person name="Reese M.G."/>
            <person name="Reinert K."/>
            <person name="Remington K."/>
            <person name="Saunders R.D.C."/>
            <person name="Scheeler F."/>
            <person name="Shen H."/>
            <person name="Shue B.C."/>
            <person name="Siden-Kiamos I."/>
            <person name="Simpson M."/>
            <person name="Skupski M.P."/>
            <person name="Smith T.J."/>
            <person name="Spier E."/>
            <person name="Spradling A.C."/>
            <person name="Stapleton M."/>
            <person name="Strong R."/>
            <person name="Sun E."/>
            <person name="Svirskas R."/>
            <person name="Tector C."/>
            <person name="Turner R."/>
            <person name="Venter E."/>
            <person name="Wang A.H."/>
            <person name="Wang X."/>
            <person name="Wang Z.-Y."/>
            <person name="Wassarman D.A."/>
            <person name="Weinstock G.M."/>
            <person name="Weissenbach J."/>
            <person name="Williams S.M."/>
            <person name="Woodage T."/>
            <person name="Worley K.C."/>
            <person name="Wu D."/>
            <person name="Yang S."/>
            <person name="Yao Q.A."/>
            <person name="Ye J."/>
            <person name="Yeh R.-F."/>
            <person name="Zaveri J.S."/>
            <person name="Zhan M."/>
            <person name="Zhang G."/>
            <person name="Zhao Q."/>
            <person name="Zheng L."/>
            <person name="Zheng X.H."/>
            <person name="Zhong F.N."/>
            <person name="Zhong W."/>
            <person name="Zhou X."/>
            <person name="Zhu S.C."/>
            <person name="Zhu X."/>
            <person name="Smith H.O."/>
            <person name="Gibbs R.A."/>
            <person name="Myers E.W."/>
            <person name="Rubin G.M."/>
            <person name="Venter J.C."/>
        </authorList>
    </citation>
    <scope>NUCLEOTIDE SEQUENCE [LARGE SCALE GENOMIC DNA]</scope>
    <source>
        <strain>Berkeley</strain>
    </source>
</reference>
<reference key="4">
    <citation type="journal article" date="2002" name="Genome Biol.">
        <title>Annotation of the Drosophila melanogaster euchromatic genome: a systematic review.</title>
        <authorList>
            <person name="Misra S."/>
            <person name="Crosby M.A."/>
            <person name="Mungall C.J."/>
            <person name="Matthews B.B."/>
            <person name="Campbell K.S."/>
            <person name="Hradecky P."/>
            <person name="Huang Y."/>
            <person name="Kaminker J.S."/>
            <person name="Millburn G.H."/>
            <person name="Prochnik S.E."/>
            <person name="Smith C.D."/>
            <person name="Tupy J.L."/>
            <person name="Whitfield E.J."/>
            <person name="Bayraktaroglu L."/>
            <person name="Berman B.P."/>
            <person name="Bettencourt B.R."/>
            <person name="Celniker S.E."/>
            <person name="de Grey A.D.N.J."/>
            <person name="Drysdale R.A."/>
            <person name="Harris N.L."/>
            <person name="Richter J."/>
            <person name="Russo S."/>
            <person name="Schroeder A.J."/>
            <person name="Shu S.Q."/>
            <person name="Stapleton M."/>
            <person name="Yamada C."/>
            <person name="Ashburner M."/>
            <person name="Gelbart W.M."/>
            <person name="Rubin G.M."/>
            <person name="Lewis S.E."/>
        </authorList>
    </citation>
    <scope>GENOME REANNOTATION</scope>
    <source>
        <strain>Berkeley</strain>
    </source>
</reference>
<reference key="5">
    <citation type="journal article" date="2002" name="Genome Biol.">
        <title>A Drosophila full-length cDNA resource.</title>
        <authorList>
            <person name="Stapleton M."/>
            <person name="Carlson J.W."/>
            <person name="Brokstein P."/>
            <person name="Yu C."/>
            <person name="Champe M."/>
            <person name="George R.A."/>
            <person name="Guarin H."/>
            <person name="Kronmiller B."/>
            <person name="Pacleb J.M."/>
            <person name="Park S."/>
            <person name="Wan K.H."/>
            <person name="Rubin G.M."/>
            <person name="Celniker S.E."/>
        </authorList>
    </citation>
    <scope>NUCLEOTIDE SEQUENCE [LARGE SCALE MRNA]</scope>
    <source>
        <strain>Berkeley</strain>
        <tissue>Head</tissue>
    </source>
</reference>
<reference key="6">
    <citation type="journal article" date="2008" name="J. Proteome Res.">
        <title>Phosphoproteome analysis of Drosophila melanogaster embryos.</title>
        <authorList>
            <person name="Zhai B."/>
            <person name="Villen J."/>
            <person name="Beausoleil S.A."/>
            <person name="Mintseris J."/>
            <person name="Gygi S.P."/>
        </authorList>
    </citation>
    <scope>PHOSPHORYLATION [LARGE SCALE ANALYSIS] AT SER-1181</scope>
    <scope>IDENTIFICATION BY MASS SPECTROMETRY</scope>
    <source>
        <tissue>Embryo</tissue>
    </source>
</reference>
<reference key="7">
    <citation type="journal article" date="2010" name="Dev. Cell">
        <title>Kibra functions as a tumor suppressor protein that regulates Hippo signaling in conjunction with Merlin and Expanded.</title>
        <authorList>
            <person name="Yu J."/>
            <person name="Zheng Y."/>
            <person name="Dong J."/>
            <person name="Klusza S."/>
            <person name="Deng W.-M."/>
            <person name="Pan D."/>
        </authorList>
    </citation>
    <scope>FUNCTION</scope>
    <scope>SUBCELLULAR LOCATION</scope>
    <scope>INTERACTION WITH KIBRA; MER AND HPO</scope>
</reference>
<reference key="8">
    <citation type="journal article" date="2016" name="Cell Discov.">
        <title>Ack promotes tissue growth via phosphorylation and suppression of the Hippo pathway component Expanded.</title>
        <authorList>
            <person name="Hu L."/>
            <person name="Xu J."/>
            <person name="Yin M.X."/>
            <person name="Zhang L."/>
            <person name="Lu Y."/>
            <person name="Wu W."/>
            <person name="Xue Z."/>
            <person name="Ho M.S."/>
            <person name="Gao G."/>
            <person name="Zhao Y."/>
            <person name="Zhang L."/>
        </authorList>
    </citation>
    <scope>FUNCTION</scope>
    <scope>INTERACTION WITH ACK AND YKI</scope>
    <scope>DEVELOPMENTAL STAGE</scope>
    <scope>PHOSPHORYLATION AT TYR-227; TYR-423; TYR-679; TYR-766 AND TYR-1103</scope>
    <scope>MUTAGENESIS OF TYR-227; TYR-423; TYR-679; TYR-766 AND TYR-1103</scope>
</reference>
<reference key="9">
    <citation type="journal article" date="2016" name="Dev. Cell">
        <title>Drosophila Schip1 links Expanded and Tao-1 to regulate hippo signaling.</title>
        <authorList>
            <person name="Chung H.L."/>
            <person name="Augustine G.J."/>
            <person name="Choi K.W."/>
        </authorList>
    </citation>
    <scope>FUNCTION</scope>
    <scope>INTERACTION WITH SCHIP1</scope>
    <scope>DISRUPTION PHENOTYPE</scope>
</reference>
<protein>
    <recommendedName>
        <fullName>Protein expanded</fullName>
    </recommendedName>
</protein>
<gene>
    <name type="primary">ex</name>
    <name type="ORF">CG4114</name>
</gene>
<keyword id="KW-1003">Cell membrane</keyword>
<keyword id="KW-0217">Developmental protein</keyword>
<keyword id="KW-0472">Membrane</keyword>
<keyword id="KW-0597">Phosphoprotein</keyword>
<keyword id="KW-1185">Reference proteome</keyword>
<keyword id="KW-0729">SH3-binding</keyword>
<keyword id="KW-0804">Transcription</keyword>
<keyword id="KW-0805">Transcription regulation</keyword>
<name>EXPA_DROME</name>
<sequence length="1427" mass="153644">MRAFCTVSAPLEVCASSAEQLSPGSRFLALRLLGQQQPKTLYFLVDAKSRVREVYTQTCLHFATQGMLDTELFGLAVLIDGEYMFADPESKLSKYGPKSWRSSHTHGLDANGRPLLELHFRVQFYIESPFMLKDETSRHNYYLQLRHNILQRDLPREQAEQALVFLAGLALQADLGDAPPGTSNSKDDSGEETSASPSNGGRGLSATTTLPKISKRANERMLRLSTYVASTSKRETIPLPPSLPPNGADYYRIEDYLPSGLHTPWARSAMRACHREHLGMATAEAELLYIQQACSLHETINAHTYRMRLAKSEQGSGSAWFVVYAKGIKILGGESTNSSSNPETTTFLWPNITKLSFERKKFEIRSGESRITLYAASDEKNKLLLTLCKDTHQWSMKLAARLKEVSKREEEEAAESQRLHASYACSRSLLLPYKSKNEQRISVISSTSSNTTSGIVSDRVHSEDELEIMINTPPAPLAAPSTESLALAHLLDRPSVSRQTSSVGQMSLKDLEEQLAALSVRPQDASSNGATIVTNSSVQRNSMGTTANDSSTATDSPSSQHNIGSQCSSTCSTVVVTSPVNGAGASSSGAPIPVHSTSSSLELGFSHTAQNSALSETSPDDFLSTSAREETESVSGASGVYTLAHGAPPTETSGVYTMHSSELTGQSSEIAESEKSSHYGMFQPQKLEETHVQHSDSVDGKKKEDFRPRSDSNVSTGSSFRGDGSDPTDNKHSLLSAEELTNLIVGRGTYPSRKTVSSSLHSDCDYVTLPLGDQGEEEVDQPPAPPPPYSARHEKTGLCGPPIAKPIPKPIAVVAPKPDSPPCSPPVPPAPIPAPPPAIRRRDPPPYSISSKPRPTSLISVSSSAHPAPSAAGSMSSLKSEEVTARFITTRPQISILKAHTSLIPDGAKPSYAAPHHCSSVASSNGSVCSHQLSQQSLHNSNYAGGSQASLHHHHVPSHHRHSGSAAIGIVPYGLHKSTASLHHQQSCVLLPVIKPRQFLAPPPPSLPRQPPPPPPPNHPHLASHLYEREMARKQLELYQQQLYSDVDYVIYPIQDPAVSQQEYLDAKQGSLLAAMAQAAPPPPHHPYLAMQVSPAIYRSTPYLPLTLSTHSRYASTQNLSDTYVQLPGPGYSPLYSPSMASLCSSYEPPPPPPLHPAALAAAAAAGAGSSSSSMFARSRSDDNILNSLDLLPKGKRLPPPPPPPYVNRRLKKPPMPAPSEKPPPIPSKPIPSRMSPIPPRKPPTLNPHHANSPLTKTSSGAQWAGERPRPDLGLGLGLNRGNNSILAQLQASMVAQSHAQAQAQALDIALLREKSKHLDLPLISALCNDRSLLKQTKVVINPKTGQEMPTSSAQPSGATTNGVANSSAGAGTLSKARKGSTVSHRHPQDKLPPLPVQQLAEANNYVIDPAVMMKQQQQQQQHNKTS</sequence>
<dbReference type="EMBL" id="L14768">
    <property type="protein sequence ID" value="AAB39774.1"/>
    <property type="molecule type" value="mRNA"/>
</dbReference>
<dbReference type="EMBL" id="AE014134">
    <property type="protein sequence ID" value="AAF51495.1"/>
    <property type="molecule type" value="Genomic_DNA"/>
</dbReference>
<dbReference type="EMBL" id="AY069068">
    <property type="protein sequence ID" value="AAL39213.1"/>
    <property type="molecule type" value="mRNA"/>
</dbReference>
<dbReference type="PIR" id="T13720">
    <property type="entry name" value="T13720"/>
</dbReference>
<dbReference type="RefSeq" id="NP_001259823.1">
    <property type="nucleotide sequence ID" value="NM_001272894.1"/>
</dbReference>
<dbReference type="RefSeq" id="NP_476840.2">
    <property type="nucleotide sequence ID" value="NM_057492.4"/>
</dbReference>
<dbReference type="SMR" id="Q07436"/>
<dbReference type="BioGRID" id="59474">
    <property type="interactions" value="44"/>
</dbReference>
<dbReference type="ComplexPortal" id="CPX-2706">
    <property type="entry name" value="KIBRA-EX-MER complex"/>
</dbReference>
<dbReference type="DIP" id="DIP-59337N"/>
<dbReference type="FunCoup" id="Q07436">
    <property type="interactions" value="67"/>
</dbReference>
<dbReference type="IntAct" id="Q07436">
    <property type="interactions" value="2"/>
</dbReference>
<dbReference type="STRING" id="7227.FBpp0077719"/>
<dbReference type="iPTMnet" id="Q07436"/>
<dbReference type="PaxDb" id="7227-FBpp0077719"/>
<dbReference type="DNASU" id="33218"/>
<dbReference type="EnsemblMetazoa" id="FBtr0078059">
    <property type="protein sequence ID" value="FBpp0077719"/>
    <property type="gene ID" value="FBgn0004583"/>
</dbReference>
<dbReference type="EnsemblMetazoa" id="FBtr0329832">
    <property type="protein sequence ID" value="FBpp0302878"/>
    <property type="gene ID" value="FBgn0004583"/>
</dbReference>
<dbReference type="GeneID" id="33218"/>
<dbReference type="KEGG" id="dme:Dmel_CG4114"/>
<dbReference type="UCSC" id="CG4114-RA">
    <property type="organism name" value="d. melanogaster"/>
</dbReference>
<dbReference type="AGR" id="FB:FBgn0004583"/>
<dbReference type="CTD" id="110023"/>
<dbReference type="FlyBase" id="FBgn0004583">
    <property type="gene designation" value="ex"/>
</dbReference>
<dbReference type="VEuPathDB" id="VectorBase:FBgn0004583"/>
<dbReference type="eggNOG" id="KOG4371">
    <property type="taxonomic scope" value="Eukaryota"/>
</dbReference>
<dbReference type="GeneTree" id="ENSGT00940000162787"/>
<dbReference type="HOGENOM" id="CLU_003533_0_0_1"/>
<dbReference type="InParanoid" id="Q07436"/>
<dbReference type="OMA" id="EGNNYVM"/>
<dbReference type="OrthoDB" id="5957665at2759"/>
<dbReference type="PhylomeDB" id="Q07436"/>
<dbReference type="Reactome" id="R-DME-451806">
    <property type="pathway name" value="Phosphorylation-independent inhibition of YKI"/>
</dbReference>
<dbReference type="SignaLink" id="Q07436"/>
<dbReference type="BioGRID-ORCS" id="33218">
    <property type="hits" value="0 hits in 3 CRISPR screens"/>
</dbReference>
<dbReference type="ChiTaRS" id="ex">
    <property type="organism name" value="fly"/>
</dbReference>
<dbReference type="GenomeRNAi" id="33218"/>
<dbReference type="PRO" id="PR:Q07436"/>
<dbReference type="Proteomes" id="UP000000803">
    <property type="component" value="Chromosome 2L"/>
</dbReference>
<dbReference type="Bgee" id="FBgn0004583">
    <property type="expression patterns" value="Expressed in adult oenocyte (Drosophila) in adult thorax and 146 other cell types or tissues"/>
</dbReference>
<dbReference type="ExpressionAtlas" id="Q07436">
    <property type="expression patterns" value="baseline and differential"/>
</dbReference>
<dbReference type="GO" id="GO:0016327">
    <property type="term" value="C:apicolateral plasma membrane"/>
    <property type="evidence" value="ECO:0000314"/>
    <property type="project" value="FlyBase"/>
</dbReference>
<dbReference type="GO" id="GO:0098592">
    <property type="term" value="C:cytoplasmic side of apical plasma membrane"/>
    <property type="evidence" value="ECO:0000314"/>
    <property type="project" value="FlyBase"/>
</dbReference>
<dbReference type="GO" id="GO:0005856">
    <property type="term" value="C:cytoskeleton"/>
    <property type="evidence" value="ECO:0007669"/>
    <property type="project" value="InterPro"/>
</dbReference>
<dbReference type="GO" id="GO:0036375">
    <property type="term" value="C:Kibra-Ex-Mer complex"/>
    <property type="evidence" value="ECO:0000314"/>
    <property type="project" value="UniProtKB"/>
</dbReference>
<dbReference type="GO" id="GO:0005886">
    <property type="term" value="C:plasma membrane"/>
    <property type="evidence" value="ECO:0000304"/>
    <property type="project" value="Reactome"/>
</dbReference>
<dbReference type="GO" id="GO:0120219">
    <property type="term" value="C:subapical part of cell"/>
    <property type="evidence" value="ECO:0000314"/>
    <property type="project" value="FlyBase"/>
</dbReference>
<dbReference type="GO" id="GO:0140297">
    <property type="term" value="F:DNA-binding transcription factor binding"/>
    <property type="evidence" value="ECO:0000353"/>
    <property type="project" value="UniProtKB"/>
</dbReference>
<dbReference type="GO" id="GO:0019900">
    <property type="term" value="F:kinase binding"/>
    <property type="evidence" value="ECO:0000353"/>
    <property type="project" value="UniProtKB"/>
</dbReference>
<dbReference type="GO" id="GO:0140311">
    <property type="term" value="F:protein sequestering activity"/>
    <property type="evidence" value="ECO:0000353"/>
    <property type="project" value="FlyBase"/>
</dbReference>
<dbReference type="GO" id="GO:0017124">
    <property type="term" value="F:SH3 domain binding"/>
    <property type="evidence" value="ECO:0007669"/>
    <property type="project" value="UniProtKB-KW"/>
</dbReference>
<dbReference type="GO" id="GO:0007298">
    <property type="term" value="P:border follicle cell migration"/>
    <property type="evidence" value="ECO:0000315"/>
    <property type="project" value="FlyBase"/>
</dbReference>
<dbReference type="GO" id="GO:0001745">
    <property type="term" value="P:compound eye morphogenesis"/>
    <property type="evidence" value="ECO:0000315"/>
    <property type="project" value="FlyBase"/>
</dbReference>
<dbReference type="GO" id="GO:0001751">
    <property type="term" value="P:compound eye photoreceptor cell differentiation"/>
    <property type="evidence" value="ECO:0000315"/>
    <property type="project" value="FlyBase"/>
</dbReference>
<dbReference type="GO" id="GO:0032456">
    <property type="term" value="P:endocytic recycling"/>
    <property type="evidence" value="ECO:0000316"/>
    <property type="project" value="FlyBase"/>
</dbReference>
<dbReference type="GO" id="GO:0097009">
    <property type="term" value="P:energy homeostasis"/>
    <property type="evidence" value="ECO:0000316"/>
    <property type="project" value="FlyBase"/>
</dbReference>
<dbReference type="GO" id="GO:0030707">
    <property type="term" value="P:follicle cell of egg chamber development"/>
    <property type="evidence" value="ECO:0000315"/>
    <property type="project" value="FlyBase"/>
</dbReference>
<dbReference type="GO" id="GO:0008285">
    <property type="term" value="P:negative regulation of cell population proliferation"/>
    <property type="evidence" value="ECO:0000315"/>
    <property type="project" value="FlyBase"/>
</dbReference>
<dbReference type="GO" id="GO:0045571">
    <property type="term" value="P:negative regulation of imaginal disc growth"/>
    <property type="evidence" value="ECO:0000315"/>
    <property type="project" value="FlyBase"/>
</dbReference>
<dbReference type="GO" id="GO:0046621">
    <property type="term" value="P:negative regulation of organ growth"/>
    <property type="evidence" value="ECO:0000315"/>
    <property type="project" value="FlyBase"/>
</dbReference>
<dbReference type="GO" id="GO:1904262">
    <property type="term" value="P:negative regulation of TORC1 signaling"/>
    <property type="evidence" value="ECO:0000315"/>
    <property type="project" value="FlyBase"/>
</dbReference>
<dbReference type="GO" id="GO:0043065">
    <property type="term" value="P:positive regulation of apoptotic process"/>
    <property type="evidence" value="ECO:0000315"/>
    <property type="project" value="FlyBase"/>
</dbReference>
<dbReference type="GO" id="GO:0035332">
    <property type="term" value="P:positive regulation of hippo signaling"/>
    <property type="evidence" value="ECO:0000314"/>
    <property type="project" value="FlyBase"/>
</dbReference>
<dbReference type="GO" id="GO:0032436">
    <property type="term" value="P:positive regulation of proteasomal ubiquitin-dependent protein catabolic process"/>
    <property type="evidence" value="ECO:0000315"/>
    <property type="project" value="FlyBase"/>
</dbReference>
<dbReference type="GO" id="GO:0045595">
    <property type="term" value="P:regulation of cell differentiation"/>
    <property type="evidence" value="ECO:0000316"/>
    <property type="project" value="FlyBase"/>
</dbReference>
<dbReference type="GO" id="GO:0007096">
    <property type="term" value="P:regulation of exit from mitosis"/>
    <property type="evidence" value="ECO:0000315"/>
    <property type="project" value="FlyBase"/>
</dbReference>
<dbReference type="GO" id="GO:0040008">
    <property type="term" value="P:regulation of growth"/>
    <property type="evidence" value="ECO:0000316"/>
    <property type="project" value="FlyBase"/>
</dbReference>
<dbReference type="GO" id="GO:0009966">
    <property type="term" value="P:regulation of signal transduction"/>
    <property type="evidence" value="ECO:0000316"/>
    <property type="project" value="FlyBase"/>
</dbReference>
<dbReference type="CDD" id="cd14473">
    <property type="entry name" value="FERM_B-lobe"/>
    <property type="match status" value="1"/>
</dbReference>
<dbReference type="CDD" id="cd13185">
    <property type="entry name" value="FERM_C_FRMD1_FRMD6"/>
    <property type="match status" value="1"/>
</dbReference>
<dbReference type="CDD" id="cd17101">
    <property type="entry name" value="FERM_F1_PTPN13_like"/>
    <property type="match status" value="1"/>
</dbReference>
<dbReference type="FunFam" id="2.30.29.30:FF:000675">
    <property type="entry name" value="Protein expanded"/>
    <property type="match status" value="1"/>
</dbReference>
<dbReference type="Gene3D" id="1.20.80.10">
    <property type="match status" value="1"/>
</dbReference>
<dbReference type="Gene3D" id="2.30.29.30">
    <property type="entry name" value="Pleckstrin-homology domain (PH domain)/Phosphotyrosine-binding domain (PTB)"/>
    <property type="match status" value="1"/>
</dbReference>
<dbReference type="InterPro" id="IPR019749">
    <property type="entry name" value="Band_41_domain"/>
</dbReference>
<dbReference type="InterPro" id="IPR014352">
    <property type="entry name" value="FERM/acyl-CoA-bd_prot_sf"/>
</dbReference>
<dbReference type="InterPro" id="IPR035963">
    <property type="entry name" value="FERM_2"/>
</dbReference>
<dbReference type="InterPro" id="IPR019748">
    <property type="entry name" value="FERM_central"/>
</dbReference>
<dbReference type="InterPro" id="IPR000299">
    <property type="entry name" value="FERM_domain"/>
</dbReference>
<dbReference type="InterPro" id="IPR018980">
    <property type="entry name" value="FERM_PH-like_C"/>
</dbReference>
<dbReference type="InterPro" id="IPR041781">
    <property type="entry name" value="FRMD6-FERM_C"/>
</dbReference>
<dbReference type="InterPro" id="IPR047145">
    <property type="entry name" value="FRMD6-like"/>
</dbReference>
<dbReference type="InterPro" id="IPR011993">
    <property type="entry name" value="PH-like_dom_sf"/>
</dbReference>
<dbReference type="InterPro" id="IPR029071">
    <property type="entry name" value="Ubiquitin-like_domsf"/>
</dbReference>
<dbReference type="PANTHER" id="PTHR13429">
    <property type="entry name" value="FERM DOMAIN (PROTEIN4.1-EZRIN-RADIXIN-MOESIN) FAMILY"/>
    <property type="match status" value="1"/>
</dbReference>
<dbReference type="PANTHER" id="PTHR13429:SF5">
    <property type="entry name" value="PROTEIN EXPANDED"/>
    <property type="match status" value="1"/>
</dbReference>
<dbReference type="Pfam" id="PF09380">
    <property type="entry name" value="FERM_C"/>
    <property type="match status" value="1"/>
</dbReference>
<dbReference type="Pfam" id="PF00373">
    <property type="entry name" value="FERM_M"/>
    <property type="match status" value="1"/>
</dbReference>
<dbReference type="SMART" id="SM00295">
    <property type="entry name" value="B41"/>
    <property type="match status" value="1"/>
</dbReference>
<dbReference type="SMART" id="SM01196">
    <property type="entry name" value="FERM_C"/>
    <property type="match status" value="1"/>
</dbReference>
<dbReference type="SUPFAM" id="SSF50729">
    <property type="entry name" value="PH domain-like"/>
    <property type="match status" value="1"/>
</dbReference>
<dbReference type="SUPFAM" id="SSF47031">
    <property type="entry name" value="Second domain of FERM"/>
    <property type="match status" value="1"/>
</dbReference>
<dbReference type="SUPFAM" id="SSF54236">
    <property type="entry name" value="Ubiquitin-like"/>
    <property type="match status" value="1"/>
</dbReference>
<dbReference type="PROSITE" id="PS50057">
    <property type="entry name" value="FERM_3"/>
    <property type="match status" value="1"/>
</dbReference>
<comment type="function">
    <text evidence="5 6 7 8">Activates the Hippo/SWH (Sav/Wts/Hpo) signaling pathway, a signaling pathway that plays a pivotal role in organ size control and tumor suppression by restricting proliferation and promoting apoptosis (PubMed:20159598, PubMed:26954546, PubMed:27462444, PubMed:8269855). The core of this pathway is composed of a kinase cascade wherein Hippo (Hpo), in complex with its regulatory protein Salvador (Sav), phosphorylates and activates Warts (Wts) in complex with its regulatory protein Mats, which in turn phosphorylates and inactivates the Yorkie (Yki) oncoprotein. Ex acts synergistically along with Mer and Kibra to regulate the Hippo signaling pathway (PubMed:20159598). Involved in the control of cell proliferation in imaginal disks (PubMed:27462444, PubMed:8269855). May bind to certain proteins of signal transduction pathways by interaction with their SH3 domains (PubMed:20159598). Required for apical localization of Schip1 (PubMed:26954546).</text>
</comment>
<comment type="subunit">
    <text evidence="5 6 7">Forms a complex with Kibra and Mer (PubMed:20159598). Interacts (via RXPPXY motif) with Kibra (via domain WW 1) (PubMed:20159598). Interacts with Mer and Hpo (via SARAH domain) (PubMed:20159598). Interacts with Schip1; the interaction results in recruitment of Schip1 to the apical cell membrane (PubMed:26954546). Interacts with ack and yki (PubMed:27462444).</text>
</comment>
<comment type="interaction">
    <interactant intactId="EBI-192660">
        <id>Q07436</id>
    </interactant>
    <interactant intactId="EBI-672928">
        <id>P10040</id>
        <label>crb</label>
    </interactant>
    <organismsDiffer>false</organismsDiffer>
    <experiments>2</experiments>
</comment>
<comment type="subcellular location">
    <subcellularLocation>
        <location evidence="5">Apical cell membrane</location>
    </subcellularLocation>
    <text>Apical surface of disk cells.</text>
</comment>
<comment type="developmental stage">
    <text evidence="7">Detected in wing disks (at protein level).</text>
</comment>
<comment type="PTM">
    <text evidence="7">Phosphorylated by Ack at several tyrosines including Tyr-227, Tyr-423, Tyr-679, Tyr-766 and Tyr-1103.</text>
</comment>
<comment type="disruption phenotype">
    <text evidence="6 8">Hyperplasia of the imaginal disk resulting in wing overgrowth (PubMed:8269855). This overgrowth is limited to specific regions along the 2 wing axes (PubMed:8269855). Defects also in eyes, head, thorax and limbs where duplication and bulging often occur (PubMed:8269855). RNAi-mediated knockdown reduces the amount of Schip1 in the apical region of the cell.</text>
</comment>
<proteinExistence type="evidence at protein level"/>
<feature type="chain" id="PRO_0000219443" description="Protein expanded">
    <location>
        <begin position="1"/>
        <end position="1427"/>
    </location>
</feature>
<feature type="domain" description="FERM" evidence="2">
    <location>
        <begin position="26"/>
        <end position="399"/>
    </location>
</feature>
<feature type="region of interest" description="Disordered" evidence="3">
    <location>
        <begin position="176"/>
        <end position="212"/>
    </location>
</feature>
<feature type="region of interest" description="Disordered" evidence="3">
    <location>
        <begin position="520"/>
        <end position="566"/>
    </location>
</feature>
<feature type="region of interest" description="Disordered" evidence="3">
    <location>
        <begin position="611"/>
        <end position="656"/>
    </location>
</feature>
<feature type="region of interest" description="Disordered" evidence="3">
    <location>
        <begin position="688"/>
        <end position="732"/>
    </location>
</feature>
<feature type="region of interest" description="Disordered" evidence="3">
    <location>
        <begin position="766"/>
        <end position="792"/>
    </location>
</feature>
<feature type="region of interest" description="Disordered" evidence="3">
    <location>
        <begin position="815"/>
        <end position="880"/>
    </location>
</feature>
<feature type="region of interest" description="Disordered" evidence="3">
    <location>
        <begin position="939"/>
        <end position="963"/>
    </location>
</feature>
<feature type="region of interest" description="Disordered" evidence="3">
    <location>
        <begin position="1000"/>
        <end position="1022"/>
    </location>
</feature>
<feature type="region of interest" description="Disordered" evidence="3">
    <location>
        <begin position="1190"/>
        <end position="1267"/>
    </location>
</feature>
<feature type="region of interest" description="Disordered" evidence="3">
    <location>
        <begin position="1345"/>
        <end position="1398"/>
    </location>
</feature>
<feature type="short sequence motif" description="RXPPXY motif">
    <location>
        <begin position="842"/>
        <end position="847"/>
    </location>
</feature>
<feature type="short sequence motif" description="SH3-binding" evidence="1">
    <location>
        <begin position="1008"/>
        <end position="1020"/>
    </location>
</feature>
<feature type="short sequence motif" description="SH3-binding" evidence="1">
    <location>
        <begin position="1149"/>
        <end position="1157"/>
    </location>
</feature>
<feature type="compositionally biased region" description="Polar residues" evidence="3">
    <location>
        <begin position="192"/>
        <end position="211"/>
    </location>
</feature>
<feature type="compositionally biased region" description="Polar residues" evidence="3">
    <location>
        <begin position="524"/>
        <end position="544"/>
    </location>
</feature>
<feature type="compositionally biased region" description="Low complexity" evidence="3">
    <location>
        <begin position="545"/>
        <end position="559"/>
    </location>
</feature>
<feature type="compositionally biased region" description="Basic and acidic residues" evidence="3">
    <location>
        <begin position="688"/>
        <end position="710"/>
    </location>
</feature>
<feature type="compositionally biased region" description="Pro residues" evidence="3">
    <location>
        <begin position="818"/>
        <end position="838"/>
    </location>
</feature>
<feature type="compositionally biased region" description="Polar residues" evidence="3">
    <location>
        <begin position="848"/>
        <end position="859"/>
    </location>
</feature>
<feature type="compositionally biased region" description="Low complexity" evidence="3">
    <location>
        <begin position="860"/>
        <end position="877"/>
    </location>
</feature>
<feature type="compositionally biased region" description="Basic residues" evidence="3">
    <location>
        <begin position="951"/>
        <end position="963"/>
    </location>
</feature>
<feature type="compositionally biased region" description="Pro residues" evidence="3">
    <location>
        <begin position="1001"/>
        <end position="1019"/>
    </location>
</feature>
<feature type="compositionally biased region" description="Pro residues" evidence="3">
    <location>
        <begin position="1214"/>
        <end position="1230"/>
    </location>
</feature>
<feature type="compositionally biased region" description="Pro residues" evidence="3">
    <location>
        <begin position="1237"/>
        <end position="1246"/>
    </location>
</feature>
<feature type="compositionally biased region" description="Polar residues" evidence="3">
    <location>
        <begin position="1253"/>
        <end position="1262"/>
    </location>
</feature>
<feature type="compositionally biased region" description="Polar residues" evidence="3">
    <location>
        <begin position="1345"/>
        <end position="1370"/>
    </location>
</feature>
<feature type="compositionally biased region" description="Basic residues" evidence="3">
    <location>
        <begin position="1376"/>
        <end position="1388"/>
    </location>
</feature>
<feature type="modified residue" description="Phosphotyrosine" evidence="7">
    <location>
        <position position="227"/>
    </location>
</feature>
<feature type="modified residue" description="Phosphotyrosine" evidence="7">
    <location>
        <position position="423"/>
    </location>
</feature>
<feature type="modified residue" description="Phosphotyrosine" evidence="7">
    <location>
        <position position="679"/>
    </location>
</feature>
<feature type="modified residue" description="Phosphotyrosine" evidence="7">
    <location>
        <position position="766"/>
    </location>
</feature>
<feature type="modified residue" description="Phosphotyrosine" evidence="7">
    <location>
        <position position="1103"/>
    </location>
</feature>
<feature type="modified residue" description="Phosphoserine" evidence="4">
    <location>
        <position position="1181"/>
    </location>
</feature>
<feature type="mutagenesis site" description="Inhibits wing growth. Reduces phosphorylation by Ack; when associated with A-423, A-679, A-766 and A-1103." evidence="7">
    <original>Y</original>
    <variation>A</variation>
    <location>
        <position position="227"/>
    </location>
</feature>
<feature type="mutagenesis site" description="Inhibits wing growth. Reduces phosphorylation by Ack; when associated with A-227, A-679, A-766 and A-1103." evidence="7">
    <original>Y</original>
    <variation>A</variation>
    <location>
        <position position="423"/>
    </location>
</feature>
<feature type="mutagenesis site" description="Inhibits wing growth. Reduces phosphorylation by Ack; when associated with A-227, A-423, A-766 and A-1103." evidence="7">
    <original>Y</original>
    <variation>A</variation>
    <location>
        <position position="679"/>
    </location>
</feature>
<feature type="mutagenesis site" description="Inhibits wing growth. Reduces phosphorylation by Ack; when associated with A-227, A-423, A-679, and A-1103." evidence="7">
    <original>Y</original>
    <variation>A</variation>
    <location>
        <position position="766"/>
    </location>
</feature>
<feature type="mutagenesis site" description="Inhibits wing growth. Reduces phosphorylation by Ack; when associated with A-227, A-423, A-679 and A-766." evidence="7">
    <original>Y</original>
    <variation>A</variation>
    <location>
        <position position="1103"/>
    </location>
</feature>
<feature type="sequence conflict" description="In Ref. 1; AAB39774." evidence="9" ref="1">
    <original>EQ</original>
    <variation>DE</variation>
    <location>
        <begin position="160"/>
        <end position="161"/>
    </location>
</feature>
<feature type="sequence conflict" description="In Ref. 1; AAB39774." evidence="9" ref="1">
    <original>S</original>
    <variation>L</variation>
    <location>
        <position position="194"/>
    </location>
</feature>
<feature type="sequence conflict" description="In Ref. 1; AAB39774." evidence="9" ref="1">
    <original>F</original>
    <variation>S</variation>
    <location>
        <position position="347"/>
    </location>
</feature>
<feature type="sequence conflict" description="In Ref. 1; AAB39774." evidence="9" ref="1">
    <original>I</original>
    <variation>T</variation>
    <location>
        <position position="563"/>
    </location>
</feature>
<feature type="sequence conflict" description="In Ref. 1; AAB39774." evidence="9" ref="1">
    <original>A</original>
    <variation>D</variation>
    <location>
        <position position="671"/>
    </location>
</feature>
<feature type="sequence conflict" description="In Ref. 1; AAB39774." evidence="9" ref="1">
    <original>Q</original>
    <variation>S</variation>
    <location>
        <position position="693"/>
    </location>
</feature>
<feature type="sequence conflict" description="In Ref. 1; AAB39774." evidence="9" ref="1">
    <original>SM</original>
    <variation>FN</variation>
    <location>
        <begin position="1293"/>
        <end position="1294"/>
    </location>
</feature>
<feature type="sequence conflict" description="In Ref. 1; AAB39774." evidence="9" ref="1">
    <original>Q</original>
    <variation>QQQ</variation>
    <location>
        <position position="1422"/>
    </location>
</feature>
<evidence type="ECO:0000255" key="1"/>
<evidence type="ECO:0000255" key="2">
    <source>
        <dbReference type="PROSITE-ProRule" id="PRU00084"/>
    </source>
</evidence>
<evidence type="ECO:0000256" key="3">
    <source>
        <dbReference type="SAM" id="MobiDB-lite"/>
    </source>
</evidence>
<evidence type="ECO:0000269" key="4">
    <source>
    </source>
</evidence>
<evidence type="ECO:0000269" key="5">
    <source>
    </source>
</evidence>
<evidence type="ECO:0000269" key="6">
    <source>
    </source>
</evidence>
<evidence type="ECO:0000269" key="7">
    <source>
    </source>
</evidence>
<evidence type="ECO:0000269" key="8">
    <source>
    </source>
</evidence>
<evidence type="ECO:0000305" key="9"/>
<accession>Q07436</accession>
<accession>Q9VPQ0</accession>
<organism>
    <name type="scientific">Drosophila melanogaster</name>
    <name type="common">Fruit fly</name>
    <dbReference type="NCBI Taxonomy" id="7227"/>
    <lineage>
        <taxon>Eukaryota</taxon>
        <taxon>Metazoa</taxon>
        <taxon>Ecdysozoa</taxon>
        <taxon>Arthropoda</taxon>
        <taxon>Hexapoda</taxon>
        <taxon>Insecta</taxon>
        <taxon>Pterygota</taxon>
        <taxon>Neoptera</taxon>
        <taxon>Endopterygota</taxon>
        <taxon>Diptera</taxon>
        <taxon>Brachycera</taxon>
        <taxon>Muscomorpha</taxon>
        <taxon>Ephydroidea</taxon>
        <taxon>Drosophilidae</taxon>
        <taxon>Drosophila</taxon>
        <taxon>Sophophora</taxon>
    </lineage>
</organism>